<sequence>MCCLFLRLRDYSTAHALSLPPCQRCGLQPWSARSHARRTLGVRKAGEMLRQEAASLSSSPRWTPSRRDAPCGRTLASASRPSTEGAMADRSSSSSSSPAPASAPGSSFGNKRSYAIHRAASSFPVGTSSSSARDTTYPHTFRTPLSAGNPQRSGHKSWTPQVGYSATSSAVSAHAPSVIVAVVEGRGLARGEIGMASIDLKSPQIMLSQFADNTTYAKVITKLQVLSPLEIIMSNTACVVGNSTKLFTLITENFKNVNFTTVQRKYFNETKGLEYIEQLCIAEFSSVLMEVQSRYYCLAAAAALLKYVEFIQNSVYAPKSLKIYFQGSEQTAMIDSSSAQNLELLVNNQDYRSNHTLFGVLNYTKTAGGSRRLRSNILEPLVDVETISMRLDCVQELLQDEELFFGLQSVISRFLDTEQLLSVLVQIPKQDTVNAAESKITNLIYLKHTLELVEPLKVTLKNCSTPLLRAYYGSLEDHRFGLILDKIKTVINDDARYMKGCLNMRTQKCYAVRSNISEFLDIARRTYTEIVDDIAGMIAQLAEKYSLPLRTSFSSSRGFFIQMTTDCAALSSDQLPSEFIKISKVKNSYSFTSADLIKMNERCQESLREIYHMTYMIVCKLLSEIYEHIHCLYKLSDTVSMLDMLLSFAHACTLSDYVRPEFTDTLAIKQGWHPILEKISAEKPVANNTYITEGSNVLIITGPNMSGKSTYLKQIALCQIMAQIGSYVPAEYASFRIAAQIFTRISTDDDIETNSSTFMKEMKEIAYILHNANDKSLILIDELGRGTNTEEGIGISYAVCEHLLSIKAFTLFTTHFLELCHLDALYLNVENMHFEVQHVKNTSRNKDAILYTYKLSRGLTEEKNYGLKAAEASSLPSSIVLDARDITTQITRQILQNQRSSPEMDRQRAVYHLATRLVQAARNSQLEPDRLRTYLSNLKKKYAGDFPRAVGLPEKTEE</sequence>
<evidence type="ECO:0000255" key="1"/>
<evidence type="ECO:0000256" key="2">
    <source>
        <dbReference type="SAM" id="MobiDB-lite"/>
    </source>
</evidence>
<evidence type="ECO:0000269" key="3">
    <source>
    </source>
</evidence>
<evidence type="ECO:0000269" key="4">
    <source>
    </source>
</evidence>
<evidence type="ECO:0000305" key="5"/>
<gene>
    <name type="primary">Msh4</name>
</gene>
<name>MSH4_MOUSE</name>
<accession>Q99MT2</accession>
<accession>Q920J1</accession>
<protein>
    <recommendedName>
        <fullName>MutS protein homolog 4</fullName>
        <shortName>mMsh4</shortName>
    </recommendedName>
</protein>
<keyword id="KW-0067">ATP-binding</keyword>
<keyword id="KW-0158">Chromosome</keyword>
<keyword id="KW-0238">DNA-binding</keyword>
<keyword id="KW-0469">Meiosis</keyword>
<keyword id="KW-0547">Nucleotide-binding</keyword>
<keyword id="KW-1185">Reference proteome</keyword>
<dbReference type="EMBL" id="AF298655">
    <property type="protein sequence ID" value="AAK15620.1"/>
    <property type="molecule type" value="mRNA"/>
</dbReference>
<dbReference type="EMBL" id="AF178957">
    <property type="protein sequence ID" value="AAL18350.1"/>
    <property type="molecule type" value="mRNA"/>
</dbReference>
<dbReference type="RefSeq" id="NP_114076.1">
    <property type="nucleotide sequence ID" value="NM_031870.3"/>
</dbReference>
<dbReference type="SMR" id="Q99MT2"/>
<dbReference type="CORUM" id="Q99MT2"/>
<dbReference type="FunCoup" id="Q99MT2">
    <property type="interactions" value="920"/>
</dbReference>
<dbReference type="STRING" id="10090.ENSMUSP00000005630"/>
<dbReference type="iPTMnet" id="Q99MT2"/>
<dbReference type="PhosphoSitePlus" id="Q99MT2"/>
<dbReference type="jPOST" id="Q99MT2"/>
<dbReference type="PaxDb" id="10090-ENSMUSP00000005630"/>
<dbReference type="ProteomicsDB" id="290099"/>
<dbReference type="Antibodypedia" id="33475">
    <property type="antibodies" value="146 antibodies from 20 providers"/>
</dbReference>
<dbReference type="Ensembl" id="ENSMUST00000005630.11">
    <property type="protein sequence ID" value="ENSMUSP00000005630.5"/>
    <property type="gene ID" value="ENSMUSG00000005493.16"/>
</dbReference>
<dbReference type="GeneID" id="55993"/>
<dbReference type="KEGG" id="mmu:55993"/>
<dbReference type="UCSC" id="uc008rue.2">
    <property type="organism name" value="mouse"/>
</dbReference>
<dbReference type="AGR" id="MGI:1860077"/>
<dbReference type="CTD" id="4438"/>
<dbReference type="MGI" id="MGI:1860077">
    <property type="gene designation" value="Msh4"/>
</dbReference>
<dbReference type="VEuPathDB" id="HostDB:ENSMUSG00000005493"/>
<dbReference type="eggNOG" id="KOG0220">
    <property type="taxonomic scope" value="Eukaryota"/>
</dbReference>
<dbReference type="GeneTree" id="ENSGT00550000074897"/>
<dbReference type="InParanoid" id="Q99MT2"/>
<dbReference type="OMA" id="KMTMLYK"/>
<dbReference type="OrthoDB" id="276261at2759"/>
<dbReference type="PhylomeDB" id="Q99MT2"/>
<dbReference type="TreeFam" id="TF300572"/>
<dbReference type="BioGRID-ORCS" id="55993">
    <property type="hits" value="2 hits in 114 CRISPR screens"/>
</dbReference>
<dbReference type="ChiTaRS" id="Msh4">
    <property type="organism name" value="mouse"/>
</dbReference>
<dbReference type="PRO" id="PR:Q99MT2"/>
<dbReference type="Proteomes" id="UP000000589">
    <property type="component" value="Chromosome 3"/>
</dbReference>
<dbReference type="RNAct" id="Q99MT2">
    <property type="molecule type" value="protein"/>
</dbReference>
<dbReference type="Bgee" id="ENSMUSG00000005493">
    <property type="expression patterns" value="Expressed in secondary oocyte and 11 other cell types or tissues"/>
</dbReference>
<dbReference type="ExpressionAtlas" id="Q99MT2">
    <property type="expression patterns" value="baseline and differential"/>
</dbReference>
<dbReference type="GO" id="GO:0005694">
    <property type="term" value="C:chromosome"/>
    <property type="evidence" value="ECO:0000314"/>
    <property type="project" value="UniProtKB"/>
</dbReference>
<dbReference type="GO" id="GO:0000793">
    <property type="term" value="C:condensed chromosome"/>
    <property type="evidence" value="ECO:0000314"/>
    <property type="project" value="MGI"/>
</dbReference>
<dbReference type="GO" id="GO:0000794">
    <property type="term" value="C:condensed nuclear chromosome"/>
    <property type="evidence" value="ECO:0000314"/>
    <property type="project" value="MGI"/>
</dbReference>
<dbReference type="GO" id="GO:0005654">
    <property type="term" value="C:nucleoplasm"/>
    <property type="evidence" value="ECO:0000304"/>
    <property type="project" value="Reactome"/>
</dbReference>
<dbReference type="GO" id="GO:0005634">
    <property type="term" value="C:nucleus"/>
    <property type="evidence" value="ECO:0000314"/>
    <property type="project" value="MGI"/>
</dbReference>
<dbReference type="GO" id="GO:0005713">
    <property type="term" value="C:recombination nodule"/>
    <property type="evidence" value="ECO:0000314"/>
    <property type="project" value="MGI"/>
</dbReference>
<dbReference type="GO" id="GO:0000795">
    <property type="term" value="C:synaptonemal complex"/>
    <property type="evidence" value="ECO:0000314"/>
    <property type="project" value="MGI"/>
</dbReference>
<dbReference type="GO" id="GO:0005524">
    <property type="term" value="F:ATP binding"/>
    <property type="evidence" value="ECO:0007669"/>
    <property type="project" value="UniProtKB-KW"/>
</dbReference>
<dbReference type="GO" id="GO:0140664">
    <property type="term" value="F:ATP-dependent DNA damage sensor activity"/>
    <property type="evidence" value="ECO:0007669"/>
    <property type="project" value="InterPro"/>
</dbReference>
<dbReference type="GO" id="GO:0030983">
    <property type="term" value="F:mismatched DNA binding"/>
    <property type="evidence" value="ECO:0007669"/>
    <property type="project" value="InterPro"/>
</dbReference>
<dbReference type="GO" id="GO:0007292">
    <property type="term" value="P:female gamete generation"/>
    <property type="evidence" value="ECO:0000315"/>
    <property type="project" value="MGI"/>
</dbReference>
<dbReference type="GO" id="GO:0007129">
    <property type="term" value="P:homologous chromosome pairing at meiosis"/>
    <property type="evidence" value="ECO:0000315"/>
    <property type="project" value="MGI"/>
</dbReference>
<dbReference type="GO" id="GO:0051321">
    <property type="term" value="P:meiotic cell cycle"/>
    <property type="evidence" value="ECO:0000314"/>
    <property type="project" value="MGI"/>
</dbReference>
<dbReference type="GO" id="GO:0006298">
    <property type="term" value="P:mismatch repair"/>
    <property type="evidence" value="ECO:0007669"/>
    <property type="project" value="InterPro"/>
</dbReference>
<dbReference type="GO" id="GO:0001541">
    <property type="term" value="P:ovarian follicle development"/>
    <property type="evidence" value="ECO:0000315"/>
    <property type="project" value="MGI"/>
</dbReference>
<dbReference type="GO" id="GO:0007283">
    <property type="term" value="P:spermatogenesis"/>
    <property type="evidence" value="ECO:0000315"/>
    <property type="project" value="MGI"/>
</dbReference>
<dbReference type="CDD" id="cd03243">
    <property type="entry name" value="ABC_MutS_homologs"/>
    <property type="match status" value="1"/>
</dbReference>
<dbReference type="FunFam" id="3.40.50.300:FF:000870">
    <property type="entry name" value="MutS protein homolog 4"/>
    <property type="match status" value="1"/>
</dbReference>
<dbReference type="FunFam" id="1.10.1420.10:FF:000013">
    <property type="entry name" value="mutS protein homolog 4"/>
    <property type="match status" value="1"/>
</dbReference>
<dbReference type="FunFam" id="1.10.1420.10:FF:000016">
    <property type="entry name" value="mutS protein homolog 4"/>
    <property type="match status" value="1"/>
</dbReference>
<dbReference type="FunFam" id="3.30.420.110:FF:000003">
    <property type="entry name" value="mutS protein homolog 4"/>
    <property type="match status" value="1"/>
</dbReference>
<dbReference type="Gene3D" id="1.10.1420.10">
    <property type="match status" value="2"/>
</dbReference>
<dbReference type="Gene3D" id="3.30.420.110">
    <property type="entry name" value="MutS, connector domain"/>
    <property type="match status" value="1"/>
</dbReference>
<dbReference type="Gene3D" id="3.40.50.300">
    <property type="entry name" value="P-loop containing nucleotide triphosphate hydrolases"/>
    <property type="match status" value="1"/>
</dbReference>
<dbReference type="InterPro" id="IPR000432">
    <property type="entry name" value="DNA_mismatch_repair_MutS_C"/>
</dbReference>
<dbReference type="InterPro" id="IPR007861">
    <property type="entry name" value="DNA_mismatch_repair_MutS_clamp"/>
</dbReference>
<dbReference type="InterPro" id="IPR007696">
    <property type="entry name" value="DNA_mismatch_repair_MutS_core"/>
</dbReference>
<dbReference type="InterPro" id="IPR036187">
    <property type="entry name" value="DNA_mismatch_repair_MutS_sf"/>
</dbReference>
<dbReference type="InterPro" id="IPR007860">
    <property type="entry name" value="DNA_mmatch_repair_MutS_con_dom"/>
</dbReference>
<dbReference type="InterPro" id="IPR045076">
    <property type="entry name" value="MutS"/>
</dbReference>
<dbReference type="InterPro" id="IPR036678">
    <property type="entry name" value="MutS_con_dom_sf"/>
</dbReference>
<dbReference type="InterPro" id="IPR027417">
    <property type="entry name" value="P-loop_NTPase"/>
</dbReference>
<dbReference type="PANTHER" id="PTHR11361">
    <property type="entry name" value="DNA MISMATCH REPAIR PROTEIN MUTS FAMILY MEMBER"/>
    <property type="match status" value="1"/>
</dbReference>
<dbReference type="PANTHER" id="PTHR11361:SF21">
    <property type="entry name" value="MUTS PROTEIN HOMOLOG 4"/>
    <property type="match status" value="1"/>
</dbReference>
<dbReference type="Pfam" id="PF05188">
    <property type="entry name" value="MutS_II"/>
    <property type="match status" value="1"/>
</dbReference>
<dbReference type="Pfam" id="PF05192">
    <property type="entry name" value="MutS_III"/>
    <property type="match status" value="1"/>
</dbReference>
<dbReference type="Pfam" id="PF05190">
    <property type="entry name" value="MutS_IV"/>
    <property type="match status" value="1"/>
</dbReference>
<dbReference type="Pfam" id="PF00488">
    <property type="entry name" value="MutS_V"/>
    <property type="match status" value="1"/>
</dbReference>
<dbReference type="SMART" id="SM00534">
    <property type="entry name" value="MUTSac"/>
    <property type="match status" value="1"/>
</dbReference>
<dbReference type="SMART" id="SM00533">
    <property type="entry name" value="MUTSd"/>
    <property type="match status" value="1"/>
</dbReference>
<dbReference type="SUPFAM" id="SSF53150">
    <property type="entry name" value="DNA repair protein MutS, domain II"/>
    <property type="match status" value="1"/>
</dbReference>
<dbReference type="SUPFAM" id="SSF48334">
    <property type="entry name" value="DNA repair protein MutS, domain III"/>
    <property type="match status" value="1"/>
</dbReference>
<dbReference type="SUPFAM" id="SSF52540">
    <property type="entry name" value="P-loop containing nucleoside triphosphate hydrolases"/>
    <property type="match status" value="1"/>
</dbReference>
<dbReference type="PROSITE" id="PS00486">
    <property type="entry name" value="DNA_MISMATCH_REPAIR_2"/>
    <property type="match status" value="1"/>
</dbReference>
<comment type="function">
    <text>Involved in meiotic recombination. Required for reciprocal recombination and proper segregation of homologous chromosomes at meiosis.</text>
</comment>
<comment type="subunit">
    <text>Heterooligomer of MSH4 and MSH5.</text>
</comment>
<comment type="subcellular location">
    <subcellularLocation>
        <location evidence="3 4">Chromosome</location>
    </subcellularLocation>
</comment>
<comment type="tissue specificity">
    <text>Predominantly expressed in testis.</text>
</comment>
<comment type="similarity">
    <text evidence="5">Belongs to the DNA mismatch repair MutS family.</text>
</comment>
<reference key="1">
    <citation type="journal article" date="2001" name="Mamm. Genome">
        <title>Mouse MutS homolog 4 is predominantly expressed in testis and interacts with MutS homolog 5.</title>
        <authorList>
            <person name="Her C."/>
            <person name="Wu X."/>
            <person name="Bailey S.M."/>
            <person name="Doggett N.A."/>
        </authorList>
    </citation>
    <scope>NUCLEOTIDE SEQUENCE [MRNA]</scope>
    <source>
        <strain>BALB/cJ</strain>
        <tissue>Testis</tissue>
    </source>
</reference>
<reference key="2">
    <citation type="journal article" date="2001" name="Mol. Reprod. Dev.">
        <title>Family of SRY/Sox proteins is involved in the regulation of the mouse Msh4 (MutS Homolog 4) gene expression.</title>
        <authorList>
            <person name="Santucci-Darmanin S."/>
            <person name="Vidal F."/>
            <person name="Scimeca J.C."/>
            <person name="Turc-Carel C."/>
            <person name="Paquis-Flucklinger V."/>
        </authorList>
    </citation>
    <scope>NUCLEOTIDE SEQUENCE [MRNA] OF 48-958</scope>
</reference>
<reference key="3">
    <citation type="journal article" date="2018" name="Commun. Biol.">
        <title>Evolutionarily-conserved MZIP2 is essential for crossover formation in mammalian meiosis.</title>
        <authorList>
            <person name="Zhang Q."/>
            <person name="Shao J."/>
            <person name="Fan H.Y."/>
            <person name="Yu C."/>
        </authorList>
    </citation>
    <scope>SUBCELLULAR LOCATION</scope>
</reference>
<reference key="4">
    <citation type="journal article" date="2019" name="Sci. Adv.">
        <title>SPO16 binds SHOC1 to promote homologous recombination and crossing-over in meiotic prophase I.</title>
        <authorList>
            <person name="Zhang Q."/>
            <person name="Ji S.Y."/>
            <person name="Busayavalasa K."/>
            <person name="Yu C."/>
        </authorList>
    </citation>
    <scope>SUBCELLULAR LOCATION</scope>
</reference>
<proteinExistence type="evidence at transcript level"/>
<feature type="chain" id="PRO_0000115198" description="MutS protein homolog 4">
    <location>
        <begin position="1"/>
        <end position="958"/>
    </location>
</feature>
<feature type="region of interest" description="Disordered" evidence="2">
    <location>
        <begin position="51"/>
        <end position="110"/>
    </location>
</feature>
<feature type="region of interest" description="Disordered" evidence="2">
    <location>
        <begin position="124"/>
        <end position="161"/>
    </location>
</feature>
<feature type="compositionally biased region" description="Low complexity" evidence="2">
    <location>
        <begin position="91"/>
        <end position="107"/>
    </location>
</feature>
<feature type="compositionally biased region" description="Polar residues" evidence="2">
    <location>
        <begin position="124"/>
        <end position="138"/>
    </location>
</feature>
<feature type="compositionally biased region" description="Polar residues" evidence="2">
    <location>
        <begin position="146"/>
        <end position="161"/>
    </location>
</feature>
<feature type="binding site" evidence="1">
    <location>
        <begin position="702"/>
        <end position="709"/>
    </location>
    <ligand>
        <name>ATP</name>
        <dbReference type="ChEBI" id="CHEBI:30616"/>
    </ligand>
</feature>
<feature type="sequence conflict" description="In Ref. 2; AAL18350." evidence="5" ref="2">
    <original>RTLASASRPSTEGAMADR</original>
    <variation>GPWPRVQAEYGRRHGRQ</variation>
    <location>
        <begin position="73"/>
        <end position="90"/>
    </location>
</feature>
<feature type="sequence conflict" description="In Ref. 2; AAL18350." evidence="5" ref="2">
    <original>V</original>
    <variation>I</variation>
    <location>
        <position position="125"/>
    </location>
</feature>
<feature type="sequence conflict" description="In Ref. 2; AAL18350." evidence="5" ref="2">
    <original>RL</original>
    <variation>TV</variation>
    <location>
        <begin position="372"/>
        <end position="373"/>
    </location>
</feature>
<organism>
    <name type="scientific">Mus musculus</name>
    <name type="common">Mouse</name>
    <dbReference type="NCBI Taxonomy" id="10090"/>
    <lineage>
        <taxon>Eukaryota</taxon>
        <taxon>Metazoa</taxon>
        <taxon>Chordata</taxon>
        <taxon>Craniata</taxon>
        <taxon>Vertebrata</taxon>
        <taxon>Euteleostomi</taxon>
        <taxon>Mammalia</taxon>
        <taxon>Eutheria</taxon>
        <taxon>Euarchontoglires</taxon>
        <taxon>Glires</taxon>
        <taxon>Rodentia</taxon>
        <taxon>Myomorpha</taxon>
        <taxon>Muroidea</taxon>
        <taxon>Muridae</taxon>
        <taxon>Murinae</taxon>
        <taxon>Mus</taxon>
        <taxon>Mus</taxon>
    </lineage>
</organism>